<dbReference type="EC" id="2.7.1.1" evidence="1"/>
<dbReference type="EMBL" id="L04480">
    <property type="protein sequence ID" value="AAA29894.2"/>
    <property type="molecule type" value="Genomic_DNA"/>
</dbReference>
<dbReference type="RefSeq" id="XP_018651965.1">
    <property type="nucleotide sequence ID" value="XM_018796867.1"/>
</dbReference>
<dbReference type="PDB" id="1BDG">
    <property type="method" value="X-ray"/>
    <property type="resolution" value="2.60 A"/>
    <property type="chains" value="A=1-451"/>
</dbReference>
<dbReference type="PDBsum" id="1BDG"/>
<dbReference type="SMR" id="Q26609"/>
<dbReference type="FunCoup" id="Q26609">
    <property type="interactions" value="362"/>
</dbReference>
<dbReference type="STRING" id="6183.Q26609"/>
<dbReference type="DrugBank" id="DB02379">
    <property type="generic name" value="Beta-D-Glucose"/>
</dbReference>
<dbReference type="EnsemblMetazoa" id="Smp_043030.1">
    <property type="protein sequence ID" value="Smp_043030.1"/>
    <property type="gene ID" value="Smp_043030"/>
</dbReference>
<dbReference type="GeneID" id="8347871"/>
<dbReference type="KEGG" id="smm:Smp_043030"/>
<dbReference type="WBParaSite" id="Smp_043030.1">
    <property type="protein sequence ID" value="Smp_043030.1"/>
    <property type="gene ID" value="Smp_043030"/>
</dbReference>
<dbReference type="CTD" id="8347871"/>
<dbReference type="eggNOG" id="KOG1369">
    <property type="taxonomic scope" value="Eukaryota"/>
</dbReference>
<dbReference type="HOGENOM" id="CLU_014393_5_3_1"/>
<dbReference type="InParanoid" id="Q26609"/>
<dbReference type="OMA" id="ADCVQQF"/>
<dbReference type="OrthoDB" id="419537at2759"/>
<dbReference type="PhylomeDB" id="Q26609"/>
<dbReference type="SABIO-RK" id="Q26609"/>
<dbReference type="UniPathway" id="UPA00109">
    <property type="reaction ID" value="UER00180"/>
</dbReference>
<dbReference type="UniPathway" id="UPA00242"/>
<dbReference type="EvolutionaryTrace" id="Q26609"/>
<dbReference type="Proteomes" id="UP000008854">
    <property type="component" value="Unassembled WGS sequence"/>
</dbReference>
<dbReference type="ExpressionAtlas" id="Q26609">
    <property type="expression patterns" value="baseline and differential"/>
</dbReference>
<dbReference type="GO" id="GO:0005829">
    <property type="term" value="C:cytosol"/>
    <property type="evidence" value="ECO:0007669"/>
    <property type="project" value="TreeGrafter"/>
</dbReference>
<dbReference type="GO" id="GO:0005739">
    <property type="term" value="C:mitochondrion"/>
    <property type="evidence" value="ECO:0007669"/>
    <property type="project" value="TreeGrafter"/>
</dbReference>
<dbReference type="GO" id="GO:0005524">
    <property type="term" value="F:ATP binding"/>
    <property type="evidence" value="ECO:0007669"/>
    <property type="project" value="UniProtKB-KW"/>
</dbReference>
<dbReference type="GO" id="GO:0005536">
    <property type="term" value="F:D-glucose binding"/>
    <property type="evidence" value="ECO:0007669"/>
    <property type="project" value="InterPro"/>
</dbReference>
<dbReference type="GO" id="GO:0008865">
    <property type="term" value="F:fructokinase activity"/>
    <property type="evidence" value="ECO:0007669"/>
    <property type="project" value="TreeGrafter"/>
</dbReference>
<dbReference type="GO" id="GO:0004340">
    <property type="term" value="F:glucokinase activity"/>
    <property type="evidence" value="ECO:0007669"/>
    <property type="project" value="TreeGrafter"/>
</dbReference>
<dbReference type="GO" id="GO:0019158">
    <property type="term" value="F:mannokinase activity"/>
    <property type="evidence" value="ECO:0007669"/>
    <property type="project" value="RHEA"/>
</dbReference>
<dbReference type="GO" id="GO:0006006">
    <property type="term" value="P:glucose metabolic process"/>
    <property type="evidence" value="ECO:0007669"/>
    <property type="project" value="TreeGrafter"/>
</dbReference>
<dbReference type="GO" id="GO:0006096">
    <property type="term" value="P:glycolytic process"/>
    <property type="evidence" value="ECO:0007669"/>
    <property type="project" value="UniProtKB-UniPathway"/>
</dbReference>
<dbReference type="GO" id="GO:0001678">
    <property type="term" value="P:intracellular glucose homeostasis"/>
    <property type="evidence" value="ECO:0007669"/>
    <property type="project" value="InterPro"/>
</dbReference>
<dbReference type="CDD" id="cd24019">
    <property type="entry name" value="ASKHA_NBD_HK_meta"/>
    <property type="match status" value="1"/>
</dbReference>
<dbReference type="FunFam" id="3.30.420.40:FF:000095">
    <property type="entry name" value="Phosphotransferase"/>
    <property type="match status" value="1"/>
</dbReference>
<dbReference type="FunFam" id="3.40.367.20:FF:000005">
    <property type="entry name" value="Phosphotransferase"/>
    <property type="match status" value="1"/>
</dbReference>
<dbReference type="Gene3D" id="3.30.420.40">
    <property type="match status" value="1"/>
</dbReference>
<dbReference type="Gene3D" id="3.40.367.20">
    <property type="match status" value="1"/>
</dbReference>
<dbReference type="InterPro" id="IPR043129">
    <property type="entry name" value="ATPase_NBD"/>
</dbReference>
<dbReference type="InterPro" id="IPR001312">
    <property type="entry name" value="Hexokinase"/>
</dbReference>
<dbReference type="InterPro" id="IPR019807">
    <property type="entry name" value="Hexokinase_BS"/>
</dbReference>
<dbReference type="InterPro" id="IPR022673">
    <property type="entry name" value="Hexokinase_C"/>
</dbReference>
<dbReference type="InterPro" id="IPR022672">
    <property type="entry name" value="Hexokinase_N"/>
</dbReference>
<dbReference type="PANTHER" id="PTHR19443">
    <property type="entry name" value="HEXOKINASE"/>
    <property type="match status" value="1"/>
</dbReference>
<dbReference type="PANTHER" id="PTHR19443:SF16">
    <property type="entry name" value="HEXOKINASE TYPE 1-RELATED"/>
    <property type="match status" value="1"/>
</dbReference>
<dbReference type="Pfam" id="PF00349">
    <property type="entry name" value="Hexokinase_1"/>
    <property type="match status" value="1"/>
</dbReference>
<dbReference type="Pfam" id="PF03727">
    <property type="entry name" value="Hexokinase_2"/>
    <property type="match status" value="1"/>
</dbReference>
<dbReference type="PRINTS" id="PR00475">
    <property type="entry name" value="HEXOKINASE"/>
</dbReference>
<dbReference type="SUPFAM" id="SSF53067">
    <property type="entry name" value="Actin-like ATPase domain"/>
    <property type="match status" value="2"/>
</dbReference>
<dbReference type="PROSITE" id="PS00378">
    <property type="entry name" value="HEXOKINASE_1"/>
    <property type="match status" value="1"/>
</dbReference>
<dbReference type="PROSITE" id="PS51748">
    <property type="entry name" value="HEXOKINASE_2"/>
    <property type="match status" value="1"/>
</dbReference>
<name>HXK_SCHMA</name>
<keyword id="KW-0002">3D-structure</keyword>
<keyword id="KW-0067">ATP-binding</keyword>
<keyword id="KW-0324">Glycolysis</keyword>
<keyword id="KW-0418">Kinase</keyword>
<keyword id="KW-0547">Nucleotide-binding</keyword>
<keyword id="KW-1185">Reference proteome</keyword>
<keyword id="KW-0808">Transferase</keyword>
<reference key="1">
    <citation type="journal article" date="1995" name="Exp. Parasitol.">
        <title>Schistosoma mansoni hexokinase: cDNA cloning and immunogenicity studies.</title>
        <authorList>
            <person name="Shoemaker C.B."/>
            <person name="Reynolds S."/>
            <person name="Wei G."/>
            <person name="Harn D."/>
        </authorList>
    </citation>
    <scope>NUCLEOTIDE SEQUENCE [GENOMIC DNA]</scope>
    <source>
        <strain>Puerto Rican</strain>
    </source>
</reference>
<reference key="2">
    <citation type="submission" date="2000-11" db="EMBL/GenBank/DDBJ databases">
        <authorList>
            <person name="Shoemaker C.B."/>
            <person name="Reynolds S."/>
            <person name="Wei G."/>
            <person name="Harn D."/>
        </authorList>
    </citation>
    <scope>SEQUENCE REVISION TO 33</scope>
</reference>
<reference key="3">
    <citation type="journal article" date="1998" name="Nat. Struct. Biol.">
        <title>The structure of mammalian hexokinase-1.</title>
        <authorList>
            <person name="Mulichak A.M."/>
            <person name="Wilson J.E."/>
            <person name="Padmanabhan K."/>
            <person name="Garavito R.M."/>
        </authorList>
    </citation>
    <scope>X-RAY CRYSTALLOGRAPHY (2.6 ANGSTROMS) IN COMPLEX WITH GLUCOSE</scope>
</reference>
<comment type="function">
    <text evidence="1">Catalyzes the phosphorylation of various hexoses to hexose 6-phosphate.</text>
</comment>
<comment type="catalytic activity">
    <reaction evidence="1 4">
        <text>a D-hexose + ATP = a D-hexose 6-phosphate + ADP + H(+)</text>
        <dbReference type="Rhea" id="RHEA:22740"/>
        <dbReference type="ChEBI" id="CHEBI:4194"/>
        <dbReference type="ChEBI" id="CHEBI:15378"/>
        <dbReference type="ChEBI" id="CHEBI:30616"/>
        <dbReference type="ChEBI" id="CHEBI:229467"/>
        <dbReference type="ChEBI" id="CHEBI:456216"/>
        <dbReference type="EC" id="2.7.1.1"/>
    </reaction>
    <physiologicalReaction direction="left-to-right" evidence="1">
        <dbReference type="Rhea" id="RHEA:22741"/>
    </physiologicalReaction>
</comment>
<comment type="catalytic activity">
    <reaction evidence="1">
        <text>D-mannose + ATP = D-mannose 6-phosphate + ADP + H(+)</text>
        <dbReference type="Rhea" id="RHEA:11028"/>
        <dbReference type="ChEBI" id="CHEBI:4208"/>
        <dbReference type="ChEBI" id="CHEBI:15378"/>
        <dbReference type="ChEBI" id="CHEBI:30616"/>
        <dbReference type="ChEBI" id="CHEBI:58735"/>
        <dbReference type="ChEBI" id="CHEBI:456216"/>
        <dbReference type="EC" id="2.7.1.1"/>
    </reaction>
    <physiologicalReaction direction="left-to-right" evidence="1">
        <dbReference type="Rhea" id="RHEA:11029"/>
    </physiologicalReaction>
</comment>
<comment type="catalytic activity">
    <reaction evidence="1">
        <text>D-fructose + ATP = D-fructose 6-phosphate + ADP + H(+)</text>
        <dbReference type="Rhea" id="RHEA:16125"/>
        <dbReference type="ChEBI" id="CHEBI:15378"/>
        <dbReference type="ChEBI" id="CHEBI:30616"/>
        <dbReference type="ChEBI" id="CHEBI:37721"/>
        <dbReference type="ChEBI" id="CHEBI:61527"/>
        <dbReference type="ChEBI" id="CHEBI:456216"/>
        <dbReference type="EC" id="2.7.1.1"/>
    </reaction>
    <physiologicalReaction direction="left-to-right" evidence="1">
        <dbReference type="Rhea" id="RHEA:16126"/>
    </physiologicalReaction>
</comment>
<comment type="catalytic activity">
    <reaction evidence="1">
        <text>D-glucose + ATP = D-glucose 6-phosphate + ADP + H(+)</text>
        <dbReference type="Rhea" id="RHEA:17825"/>
        <dbReference type="ChEBI" id="CHEBI:4167"/>
        <dbReference type="ChEBI" id="CHEBI:15378"/>
        <dbReference type="ChEBI" id="CHEBI:30616"/>
        <dbReference type="ChEBI" id="CHEBI:61548"/>
        <dbReference type="ChEBI" id="CHEBI:456216"/>
        <dbReference type="EC" id="2.7.1.1"/>
    </reaction>
    <physiologicalReaction direction="left-to-right" evidence="1">
        <dbReference type="Rhea" id="RHEA:17826"/>
    </physiologicalReaction>
</comment>
<comment type="pathway">
    <text evidence="1">Carbohydrate metabolism; hexose metabolism.</text>
</comment>
<comment type="pathway">
    <text evidence="1">Carbohydrate degradation; glycolysis; D-glyceraldehyde 3-phosphate and glycerone phosphate from D-glucose: step 1/4.</text>
</comment>
<comment type="subunit">
    <text evidence="5">Monomer.</text>
</comment>
<comment type="similarity">
    <text evidence="4 6">Belongs to the hexokinase family.</text>
</comment>
<accession>Q26609</accession>
<organism>
    <name type="scientific">Schistosoma mansoni</name>
    <name type="common">Blood fluke</name>
    <dbReference type="NCBI Taxonomy" id="6183"/>
    <lineage>
        <taxon>Eukaryota</taxon>
        <taxon>Metazoa</taxon>
        <taxon>Spiralia</taxon>
        <taxon>Lophotrochozoa</taxon>
        <taxon>Platyhelminthes</taxon>
        <taxon>Trematoda</taxon>
        <taxon>Digenea</taxon>
        <taxon>Strigeidida</taxon>
        <taxon>Schistosomatoidea</taxon>
        <taxon>Schistosomatidae</taxon>
        <taxon>Schistosoma</taxon>
    </lineage>
</organism>
<sequence length="451" mass="50446">MVFSDQQLFEKVVEILKPFDLSVVDYEEICDRMGESMRLGLQKSTNEKSSIKMFPSYVTKTPNGTETGNFLALDLGGTNYRVLSVTLEGKGKSPRIQERTYCIPAEKMSGSGTELFKYIAETLADFLENNGMKDKKFDLGFTFSFPCVQKGLTHATLVRWTKGFSADGVEGHNVAELLQTELDKRELNVKCVAVVNDTVGTLASCALEDPKCAVGLIVGTGTNVAYIEDSSKVELMDGVKEPEVVINTEWGAFGEKGELDCWRTQFDKSMDIDSLHPGKQLYEKMVSGMYLGELVRHIIVYLVEQKILFRGDLPERLKVRNSLLTRYLTDVERDPAHLLYNTHYMLTDDLHVPVVEPIDNRIVRYACEMVVKRAAYLAGAGIACILRRINRSEVTVGVDGSLYKFHPKFCERMTDMVDKLKPKNTRFCLRLSEDGSGKGAAAIAASCTRQN</sequence>
<evidence type="ECO:0000250" key="1">
    <source>
        <dbReference type="UniProtKB" id="A0A0K0JFP3"/>
    </source>
</evidence>
<evidence type="ECO:0000250" key="2">
    <source>
        <dbReference type="UniProtKB" id="P19367"/>
    </source>
</evidence>
<evidence type="ECO:0000255" key="3"/>
<evidence type="ECO:0000255" key="4">
    <source>
        <dbReference type="PROSITE-ProRule" id="PRU01084"/>
    </source>
</evidence>
<evidence type="ECO:0000269" key="5">
    <source>
    </source>
</evidence>
<evidence type="ECO:0000305" key="6"/>
<evidence type="ECO:0007829" key="7">
    <source>
        <dbReference type="PDB" id="1BDG"/>
    </source>
</evidence>
<proteinExistence type="evidence at protein level"/>
<feature type="chain" id="PRO_0000197599" description="Hexokinase">
    <location>
        <begin position="1"/>
        <end position="451"/>
    </location>
</feature>
<feature type="domain" description="Hexokinase" evidence="4">
    <location>
        <begin position="6"/>
        <end position="445"/>
    </location>
</feature>
<feature type="region of interest" description="Hexokinase small subdomain" evidence="4">
    <location>
        <begin position="63"/>
        <end position="195"/>
    </location>
</feature>
<feature type="region of interest" description="Hexokinase large subdomain" evidence="4">
    <location>
        <begin position="196"/>
        <end position="434"/>
    </location>
</feature>
<feature type="binding site" evidence="3">
    <location>
        <begin position="74"/>
        <end position="79"/>
    </location>
    <ligand>
        <name>ATP</name>
        <dbReference type="ChEBI" id="CHEBI:30616"/>
    </ligand>
</feature>
<feature type="binding site" evidence="5">
    <location>
        <position position="144"/>
    </location>
    <ligand>
        <name>substrate</name>
    </ligand>
</feature>
<feature type="binding site" evidence="5">
    <location>
        <begin position="161"/>
        <end position="162"/>
    </location>
    <ligand>
        <name>substrate</name>
    </ligand>
</feature>
<feature type="binding site" evidence="5">
    <location>
        <begin position="196"/>
        <end position="197"/>
    </location>
    <ligand>
        <name>substrate</name>
    </ligand>
</feature>
<feature type="binding site" evidence="5">
    <location>
        <begin position="222"/>
        <end position="223"/>
    </location>
    <ligand>
        <name>substrate</name>
    </ligand>
</feature>
<feature type="binding site" evidence="5">
    <location>
        <position position="249"/>
    </location>
    <ligand>
        <name>substrate</name>
    </ligand>
</feature>
<feature type="binding site" evidence="5">
    <location>
        <position position="283"/>
    </location>
    <ligand>
        <name>substrate</name>
    </ligand>
</feature>
<feature type="binding site" evidence="2">
    <location>
        <begin position="288"/>
        <end position="289"/>
    </location>
    <ligand>
        <name>ATP</name>
        <dbReference type="ChEBI" id="CHEBI:30616"/>
    </ligand>
</feature>
<feature type="binding site" evidence="2">
    <location>
        <begin position="325"/>
        <end position="329"/>
    </location>
    <ligand>
        <name>ATP</name>
        <dbReference type="ChEBI" id="CHEBI:30616"/>
    </ligand>
</feature>
<feature type="binding site" evidence="2">
    <location>
        <begin position="401"/>
        <end position="405"/>
    </location>
    <ligand>
        <name>ATP</name>
        <dbReference type="ChEBI" id="CHEBI:30616"/>
    </ligand>
</feature>
<feature type="helix" evidence="7">
    <location>
        <begin position="5"/>
        <end position="16"/>
    </location>
</feature>
<feature type="helix" evidence="7">
    <location>
        <begin position="17"/>
        <end position="19"/>
    </location>
</feature>
<feature type="helix" evidence="7">
    <location>
        <begin position="23"/>
        <end position="41"/>
    </location>
</feature>
<feature type="helix" evidence="7">
    <location>
        <begin position="43"/>
        <end position="46"/>
    </location>
</feature>
<feature type="strand" evidence="7">
    <location>
        <begin position="68"/>
        <end position="87"/>
    </location>
</feature>
<feature type="strand" evidence="7">
    <location>
        <begin position="95"/>
        <end position="101"/>
    </location>
</feature>
<feature type="turn" evidence="7">
    <location>
        <begin position="105"/>
        <end position="109"/>
    </location>
</feature>
<feature type="helix" evidence="7">
    <location>
        <begin position="112"/>
        <end position="129"/>
    </location>
</feature>
<feature type="strand" evidence="7">
    <location>
        <begin position="137"/>
        <end position="143"/>
    </location>
</feature>
<feature type="strand" evidence="7">
    <location>
        <begin position="147"/>
        <end position="150"/>
    </location>
</feature>
<feature type="turn" evidence="7">
    <location>
        <begin position="151"/>
        <end position="153"/>
    </location>
</feature>
<feature type="strand" evidence="7">
    <location>
        <begin position="154"/>
        <end position="157"/>
    </location>
</feature>
<feature type="helix" evidence="7">
    <location>
        <begin position="174"/>
        <end position="183"/>
    </location>
</feature>
<feature type="turn" evidence="7">
    <location>
        <begin position="184"/>
        <end position="186"/>
    </location>
</feature>
<feature type="strand" evidence="7">
    <location>
        <begin position="189"/>
        <end position="195"/>
    </location>
</feature>
<feature type="helix" evidence="7">
    <location>
        <begin position="197"/>
        <end position="206"/>
    </location>
</feature>
<feature type="strand" evidence="7">
    <location>
        <begin position="212"/>
        <end position="229"/>
    </location>
</feature>
<feature type="turn" evidence="7">
    <location>
        <begin position="230"/>
        <end position="232"/>
    </location>
</feature>
<feature type="helix" evidence="7">
    <location>
        <begin position="234"/>
        <end position="236"/>
    </location>
</feature>
<feature type="strand" evidence="7">
    <location>
        <begin position="240"/>
        <end position="247"/>
    </location>
</feature>
<feature type="helix" evidence="7">
    <location>
        <begin position="250"/>
        <end position="252"/>
    </location>
</feature>
<feature type="turn" evidence="7">
    <location>
        <begin position="253"/>
        <end position="256"/>
    </location>
</feature>
<feature type="turn" evidence="7">
    <location>
        <begin position="258"/>
        <end position="262"/>
    </location>
</feature>
<feature type="helix" evidence="7">
    <location>
        <begin position="265"/>
        <end position="272"/>
    </location>
</feature>
<feature type="strand" evidence="7">
    <location>
        <begin position="274"/>
        <end position="276"/>
    </location>
</feature>
<feature type="helix" evidence="7">
    <location>
        <begin position="283"/>
        <end position="286"/>
    </location>
</feature>
<feature type="helix" evidence="7">
    <location>
        <begin position="288"/>
        <end position="304"/>
    </location>
</feature>
<feature type="helix" evidence="7">
    <location>
        <begin position="309"/>
        <end position="311"/>
    </location>
</feature>
<feature type="helix" evidence="7">
    <location>
        <begin position="316"/>
        <end position="318"/>
    </location>
</feature>
<feature type="helix" evidence="7">
    <location>
        <begin position="327"/>
        <end position="331"/>
    </location>
</feature>
<feature type="helix" evidence="7">
    <location>
        <begin position="340"/>
        <end position="348"/>
    </location>
</feature>
<feature type="helix" evidence="7">
    <location>
        <begin position="357"/>
        <end position="389"/>
    </location>
</feature>
<feature type="strand" evidence="7">
    <location>
        <begin position="392"/>
        <end position="400"/>
    </location>
</feature>
<feature type="helix" evidence="7">
    <location>
        <begin position="401"/>
        <end position="405"/>
    </location>
</feature>
<feature type="helix" evidence="7">
    <location>
        <begin position="409"/>
        <end position="420"/>
    </location>
</feature>
<feature type="strand" evidence="7">
    <location>
        <begin position="426"/>
        <end position="431"/>
    </location>
</feature>
<feature type="helix" evidence="7">
    <location>
        <begin position="435"/>
        <end position="444"/>
    </location>
</feature>
<protein>
    <recommendedName>
        <fullName>Hexokinase</fullName>
        <ecNumber evidence="1">2.7.1.1</ecNumber>
    </recommendedName>
</protein>